<dbReference type="EC" id="2.1.2.3" evidence="1"/>
<dbReference type="EC" id="3.5.4.10" evidence="1"/>
<dbReference type="EMBL" id="CP000577">
    <property type="protein sequence ID" value="ABN77865.1"/>
    <property type="molecule type" value="Genomic_DNA"/>
</dbReference>
<dbReference type="RefSeq" id="WP_002721490.1">
    <property type="nucleotide sequence ID" value="NC_009049.1"/>
</dbReference>
<dbReference type="SMR" id="A3PNE9"/>
<dbReference type="GeneID" id="67447876"/>
<dbReference type="KEGG" id="rsh:Rsph17029_2763"/>
<dbReference type="HOGENOM" id="CLU_016316_5_2_5"/>
<dbReference type="UniPathway" id="UPA00074">
    <property type="reaction ID" value="UER00133"/>
</dbReference>
<dbReference type="UniPathway" id="UPA00074">
    <property type="reaction ID" value="UER00135"/>
</dbReference>
<dbReference type="GO" id="GO:0005829">
    <property type="term" value="C:cytosol"/>
    <property type="evidence" value="ECO:0007669"/>
    <property type="project" value="TreeGrafter"/>
</dbReference>
<dbReference type="GO" id="GO:0003937">
    <property type="term" value="F:IMP cyclohydrolase activity"/>
    <property type="evidence" value="ECO:0007669"/>
    <property type="project" value="UniProtKB-UniRule"/>
</dbReference>
<dbReference type="GO" id="GO:0004643">
    <property type="term" value="F:phosphoribosylaminoimidazolecarboxamide formyltransferase activity"/>
    <property type="evidence" value="ECO:0007669"/>
    <property type="project" value="UniProtKB-UniRule"/>
</dbReference>
<dbReference type="GO" id="GO:0006189">
    <property type="term" value="P:'de novo' IMP biosynthetic process"/>
    <property type="evidence" value="ECO:0007669"/>
    <property type="project" value="UniProtKB-UniRule"/>
</dbReference>
<dbReference type="CDD" id="cd01421">
    <property type="entry name" value="IMPCH"/>
    <property type="match status" value="1"/>
</dbReference>
<dbReference type="FunFam" id="3.40.140.20:FF:000001">
    <property type="entry name" value="Bifunctional purine biosynthesis protein PurH"/>
    <property type="match status" value="1"/>
</dbReference>
<dbReference type="FunFam" id="3.40.140.20:FF:000002">
    <property type="entry name" value="Bifunctional purine biosynthesis protein PurH"/>
    <property type="match status" value="1"/>
</dbReference>
<dbReference type="FunFam" id="3.40.50.1380:FF:000001">
    <property type="entry name" value="Bifunctional purine biosynthesis protein PurH"/>
    <property type="match status" value="1"/>
</dbReference>
<dbReference type="Gene3D" id="3.40.140.20">
    <property type="match status" value="2"/>
</dbReference>
<dbReference type="Gene3D" id="3.40.50.1380">
    <property type="entry name" value="Methylglyoxal synthase-like domain"/>
    <property type="match status" value="1"/>
</dbReference>
<dbReference type="HAMAP" id="MF_00139">
    <property type="entry name" value="PurH"/>
    <property type="match status" value="1"/>
</dbReference>
<dbReference type="InterPro" id="IPR024051">
    <property type="entry name" value="AICAR_Tfase_dup_dom_sf"/>
</dbReference>
<dbReference type="InterPro" id="IPR016193">
    <property type="entry name" value="Cytidine_deaminase-like"/>
</dbReference>
<dbReference type="InterPro" id="IPR011607">
    <property type="entry name" value="MGS-like_dom"/>
</dbReference>
<dbReference type="InterPro" id="IPR036914">
    <property type="entry name" value="MGS-like_dom_sf"/>
</dbReference>
<dbReference type="InterPro" id="IPR002695">
    <property type="entry name" value="PurH-like"/>
</dbReference>
<dbReference type="NCBIfam" id="NF002049">
    <property type="entry name" value="PRK00881.1"/>
    <property type="match status" value="1"/>
</dbReference>
<dbReference type="NCBIfam" id="TIGR00355">
    <property type="entry name" value="purH"/>
    <property type="match status" value="1"/>
</dbReference>
<dbReference type="PANTHER" id="PTHR11692:SF0">
    <property type="entry name" value="BIFUNCTIONAL PURINE BIOSYNTHESIS PROTEIN ATIC"/>
    <property type="match status" value="1"/>
</dbReference>
<dbReference type="PANTHER" id="PTHR11692">
    <property type="entry name" value="BIFUNCTIONAL PURINE BIOSYNTHESIS PROTEIN PURH"/>
    <property type="match status" value="1"/>
</dbReference>
<dbReference type="Pfam" id="PF01808">
    <property type="entry name" value="AICARFT_IMPCHas"/>
    <property type="match status" value="1"/>
</dbReference>
<dbReference type="Pfam" id="PF02142">
    <property type="entry name" value="MGS"/>
    <property type="match status" value="1"/>
</dbReference>
<dbReference type="PIRSF" id="PIRSF000414">
    <property type="entry name" value="AICARFT_IMPCHas"/>
    <property type="match status" value="1"/>
</dbReference>
<dbReference type="SMART" id="SM00798">
    <property type="entry name" value="AICARFT_IMPCHas"/>
    <property type="match status" value="1"/>
</dbReference>
<dbReference type="SMART" id="SM00851">
    <property type="entry name" value="MGS"/>
    <property type="match status" value="1"/>
</dbReference>
<dbReference type="SUPFAM" id="SSF53927">
    <property type="entry name" value="Cytidine deaminase-like"/>
    <property type="match status" value="1"/>
</dbReference>
<dbReference type="SUPFAM" id="SSF52335">
    <property type="entry name" value="Methylglyoxal synthase-like"/>
    <property type="match status" value="1"/>
</dbReference>
<dbReference type="PROSITE" id="PS51855">
    <property type="entry name" value="MGS"/>
    <property type="match status" value="1"/>
</dbReference>
<feature type="chain" id="PRO_1000057909" description="Bifunctional purine biosynthesis protein PurH">
    <location>
        <begin position="1"/>
        <end position="529"/>
    </location>
</feature>
<feature type="domain" description="MGS-like" evidence="2">
    <location>
        <begin position="2"/>
        <end position="149"/>
    </location>
</feature>
<keyword id="KW-0378">Hydrolase</keyword>
<keyword id="KW-0511">Multifunctional enzyme</keyword>
<keyword id="KW-0658">Purine biosynthesis</keyword>
<keyword id="KW-0808">Transferase</keyword>
<reference key="1">
    <citation type="submission" date="2007-02" db="EMBL/GenBank/DDBJ databases">
        <title>Complete sequence of chromosome 1 of Rhodobacter sphaeroides ATCC 17029.</title>
        <authorList>
            <person name="Copeland A."/>
            <person name="Lucas S."/>
            <person name="Lapidus A."/>
            <person name="Barry K."/>
            <person name="Detter J.C."/>
            <person name="Glavina del Rio T."/>
            <person name="Hammon N."/>
            <person name="Israni S."/>
            <person name="Dalin E."/>
            <person name="Tice H."/>
            <person name="Pitluck S."/>
            <person name="Kiss H."/>
            <person name="Brettin T."/>
            <person name="Bruce D."/>
            <person name="Han C."/>
            <person name="Tapia R."/>
            <person name="Gilna P."/>
            <person name="Schmutz J."/>
            <person name="Larimer F."/>
            <person name="Land M."/>
            <person name="Hauser L."/>
            <person name="Kyrpides N."/>
            <person name="Mikhailova N."/>
            <person name="Richardson P."/>
            <person name="Mackenzie C."/>
            <person name="Choudhary M."/>
            <person name="Donohue T.J."/>
            <person name="Kaplan S."/>
        </authorList>
    </citation>
    <scope>NUCLEOTIDE SEQUENCE [LARGE SCALE GENOMIC DNA]</scope>
    <source>
        <strain>ATCC 17029 / ATH 2.4.9</strain>
    </source>
</reference>
<evidence type="ECO:0000255" key="1">
    <source>
        <dbReference type="HAMAP-Rule" id="MF_00139"/>
    </source>
</evidence>
<evidence type="ECO:0000255" key="2">
    <source>
        <dbReference type="PROSITE-ProRule" id="PRU01202"/>
    </source>
</evidence>
<comment type="catalytic activity">
    <reaction evidence="1">
        <text>(6R)-10-formyltetrahydrofolate + 5-amino-1-(5-phospho-beta-D-ribosyl)imidazole-4-carboxamide = 5-formamido-1-(5-phospho-D-ribosyl)imidazole-4-carboxamide + (6S)-5,6,7,8-tetrahydrofolate</text>
        <dbReference type="Rhea" id="RHEA:22192"/>
        <dbReference type="ChEBI" id="CHEBI:57453"/>
        <dbReference type="ChEBI" id="CHEBI:58467"/>
        <dbReference type="ChEBI" id="CHEBI:58475"/>
        <dbReference type="ChEBI" id="CHEBI:195366"/>
        <dbReference type="EC" id="2.1.2.3"/>
    </reaction>
</comment>
<comment type="catalytic activity">
    <reaction evidence="1">
        <text>IMP + H2O = 5-formamido-1-(5-phospho-D-ribosyl)imidazole-4-carboxamide</text>
        <dbReference type="Rhea" id="RHEA:18445"/>
        <dbReference type="ChEBI" id="CHEBI:15377"/>
        <dbReference type="ChEBI" id="CHEBI:58053"/>
        <dbReference type="ChEBI" id="CHEBI:58467"/>
        <dbReference type="EC" id="3.5.4.10"/>
    </reaction>
</comment>
<comment type="pathway">
    <text evidence="1">Purine metabolism; IMP biosynthesis via de novo pathway; 5-formamido-1-(5-phospho-D-ribosyl)imidazole-4-carboxamide from 5-amino-1-(5-phospho-D-ribosyl)imidazole-4-carboxamide (10-formyl THF route): step 1/1.</text>
</comment>
<comment type="pathway">
    <text evidence="1">Purine metabolism; IMP biosynthesis via de novo pathway; IMP from 5-formamido-1-(5-phospho-D-ribosyl)imidazole-4-carboxamide: step 1/1.</text>
</comment>
<comment type="domain">
    <text evidence="1">The IMP cyclohydrolase activity resides in the N-terminal region.</text>
</comment>
<comment type="similarity">
    <text evidence="1">Belongs to the PurH family.</text>
</comment>
<name>PUR9_CERS1</name>
<proteinExistence type="inferred from homology"/>
<sequence>MTNLVPVGRALLSVSDKSGLLDLARALADLEVELISTGGTAAALRAAGLKVRDVAEVTGFPEMMDGRVKTLHPMVHGGLLALRDDDEHLVAMAAHGIEPIDLLVVNLYPFEAAVARGASYDDCIENIDIGGPAMIRAAAKNHRFVNVVTDTADYKALLDELRAHDGATRLSFRQKLALTAYARTAAYDTAVSTWMAGALKAEAPRRRSFAGTLAQTMRYGENPHQKAAFYTDGSARPGVATAKQWQGKELSYNNINDTDAAFELVAEFDPAEGPACVIVKHANPCGVARGATLAEAYARAFDCDRVSAFGGIIALNQPLDAATAEKITEIFTEVVIAPGADEEARAIFAAKKNLRLLTTEALPDPLAPGLAFKQVAGGFLVQDRDAGHVDALDLKVVTKRAPSDAELADLLFAWTVAKHVKSNAIVYVKDGATVGVGAGQMSRVDSTRIAARKSQDMAQALGLAQPLTQGSVVASDAFFPFADGLLAAAEAGATAIIQPGGSMRDDEVIAAADEAGLAMVFTGQRHFRH</sequence>
<protein>
    <recommendedName>
        <fullName evidence="1">Bifunctional purine biosynthesis protein PurH</fullName>
    </recommendedName>
    <domain>
        <recommendedName>
            <fullName evidence="1">Phosphoribosylaminoimidazolecarboxamide formyltransferase</fullName>
            <ecNumber evidence="1">2.1.2.3</ecNumber>
        </recommendedName>
        <alternativeName>
            <fullName evidence="1">AICAR transformylase</fullName>
        </alternativeName>
    </domain>
    <domain>
        <recommendedName>
            <fullName evidence="1">IMP cyclohydrolase</fullName>
            <ecNumber evidence="1">3.5.4.10</ecNumber>
        </recommendedName>
        <alternativeName>
            <fullName evidence="1">ATIC</fullName>
        </alternativeName>
        <alternativeName>
            <fullName evidence="1">IMP synthase</fullName>
        </alternativeName>
        <alternativeName>
            <fullName evidence="1">Inosinicase</fullName>
        </alternativeName>
    </domain>
</protein>
<accession>A3PNE9</accession>
<gene>
    <name evidence="1" type="primary">purH</name>
    <name type="ordered locus">Rsph17029_2763</name>
</gene>
<organism>
    <name type="scientific">Cereibacter sphaeroides (strain ATCC 17029 / ATH 2.4.9)</name>
    <name type="common">Rhodobacter sphaeroides</name>
    <dbReference type="NCBI Taxonomy" id="349101"/>
    <lineage>
        <taxon>Bacteria</taxon>
        <taxon>Pseudomonadati</taxon>
        <taxon>Pseudomonadota</taxon>
        <taxon>Alphaproteobacteria</taxon>
        <taxon>Rhodobacterales</taxon>
        <taxon>Paracoccaceae</taxon>
        <taxon>Cereibacter</taxon>
    </lineage>
</organism>